<evidence type="ECO:0000255" key="1">
    <source>
        <dbReference type="HAMAP-Rule" id="MF_01369"/>
    </source>
</evidence>
<evidence type="ECO:0000305" key="2"/>
<feature type="chain" id="PRO_1000087202" description="Large ribosomal subunit protein uL23">
    <location>
        <begin position="1"/>
        <end position="101"/>
    </location>
</feature>
<proteinExistence type="inferred from homology"/>
<reference key="1">
    <citation type="journal article" date="2006" name="PLoS Genet.">
        <title>Secrets of soil survival revealed by the genome sequence of Arthrobacter aurescens TC1.</title>
        <authorList>
            <person name="Mongodin E.F."/>
            <person name="Shapir N."/>
            <person name="Daugherty S.C."/>
            <person name="DeBoy R.T."/>
            <person name="Emerson J.B."/>
            <person name="Shvartzbeyn A."/>
            <person name="Radune D."/>
            <person name="Vamathevan J."/>
            <person name="Riggs F."/>
            <person name="Grinberg V."/>
            <person name="Khouri H.M."/>
            <person name="Wackett L.P."/>
            <person name="Nelson K.E."/>
            <person name="Sadowsky M.J."/>
        </authorList>
    </citation>
    <scope>NUCLEOTIDE SEQUENCE [LARGE SCALE GENOMIC DNA]</scope>
    <source>
        <strain>TC1</strain>
    </source>
</reference>
<name>RL23_PAEAT</name>
<accession>A1R8U3</accession>
<organism>
    <name type="scientific">Paenarthrobacter aurescens (strain TC1)</name>
    <dbReference type="NCBI Taxonomy" id="290340"/>
    <lineage>
        <taxon>Bacteria</taxon>
        <taxon>Bacillati</taxon>
        <taxon>Actinomycetota</taxon>
        <taxon>Actinomycetes</taxon>
        <taxon>Micrococcales</taxon>
        <taxon>Micrococcaceae</taxon>
        <taxon>Paenarthrobacter</taxon>
    </lineage>
</organism>
<gene>
    <name evidence="1" type="primary">rplW</name>
    <name type="ordered locus">AAur_2946</name>
</gene>
<keyword id="KW-0687">Ribonucleoprotein</keyword>
<keyword id="KW-0689">Ribosomal protein</keyword>
<keyword id="KW-0694">RNA-binding</keyword>
<keyword id="KW-0699">rRNA-binding</keyword>
<comment type="function">
    <text evidence="1">One of the early assembly proteins it binds 23S rRNA. One of the proteins that surrounds the polypeptide exit tunnel on the outside of the ribosome. Forms the main docking site for trigger factor binding to the ribosome.</text>
</comment>
<comment type="subunit">
    <text evidence="1">Part of the 50S ribosomal subunit. Contacts protein L29, and trigger factor when it is bound to the ribosome.</text>
</comment>
<comment type="similarity">
    <text evidence="1">Belongs to the universal ribosomal protein uL23 family.</text>
</comment>
<protein>
    <recommendedName>
        <fullName evidence="1">Large ribosomal subunit protein uL23</fullName>
    </recommendedName>
    <alternativeName>
        <fullName evidence="2">50S ribosomal protein L23</fullName>
    </alternativeName>
</protein>
<dbReference type="EMBL" id="CP000474">
    <property type="protein sequence ID" value="ABM08228.1"/>
    <property type="molecule type" value="Genomic_DNA"/>
</dbReference>
<dbReference type="RefSeq" id="WP_011775593.1">
    <property type="nucleotide sequence ID" value="NC_008711.1"/>
</dbReference>
<dbReference type="SMR" id="A1R8U3"/>
<dbReference type="STRING" id="290340.AAur_2946"/>
<dbReference type="GeneID" id="92753742"/>
<dbReference type="KEGG" id="aau:AAur_2946"/>
<dbReference type="eggNOG" id="COG0089">
    <property type="taxonomic scope" value="Bacteria"/>
</dbReference>
<dbReference type="HOGENOM" id="CLU_037562_3_2_11"/>
<dbReference type="OrthoDB" id="9793353at2"/>
<dbReference type="Proteomes" id="UP000000637">
    <property type="component" value="Chromosome"/>
</dbReference>
<dbReference type="GO" id="GO:1990904">
    <property type="term" value="C:ribonucleoprotein complex"/>
    <property type="evidence" value="ECO:0007669"/>
    <property type="project" value="UniProtKB-KW"/>
</dbReference>
<dbReference type="GO" id="GO:0005840">
    <property type="term" value="C:ribosome"/>
    <property type="evidence" value="ECO:0007669"/>
    <property type="project" value="UniProtKB-KW"/>
</dbReference>
<dbReference type="GO" id="GO:0019843">
    <property type="term" value="F:rRNA binding"/>
    <property type="evidence" value="ECO:0007669"/>
    <property type="project" value="UniProtKB-UniRule"/>
</dbReference>
<dbReference type="GO" id="GO:0003735">
    <property type="term" value="F:structural constituent of ribosome"/>
    <property type="evidence" value="ECO:0007669"/>
    <property type="project" value="InterPro"/>
</dbReference>
<dbReference type="GO" id="GO:0006412">
    <property type="term" value="P:translation"/>
    <property type="evidence" value="ECO:0007669"/>
    <property type="project" value="UniProtKB-UniRule"/>
</dbReference>
<dbReference type="FunFam" id="3.30.70.330:FF:000001">
    <property type="entry name" value="50S ribosomal protein L23"/>
    <property type="match status" value="1"/>
</dbReference>
<dbReference type="Gene3D" id="3.30.70.330">
    <property type="match status" value="1"/>
</dbReference>
<dbReference type="HAMAP" id="MF_01369_B">
    <property type="entry name" value="Ribosomal_uL23_B"/>
    <property type="match status" value="1"/>
</dbReference>
<dbReference type="InterPro" id="IPR012677">
    <property type="entry name" value="Nucleotide-bd_a/b_plait_sf"/>
</dbReference>
<dbReference type="InterPro" id="IPR013025">
    <property type="entry name" value="Ribosomal_uL23-like"/>
</dbReference>
<dbReference type="InterPro" id="IPR012678">
    <property type="entry name" value="Ribosomal_uL23/eL15/eS24_sf"/>
</dbReference>
<dbReference type="NCBIfam" id="NF004363">
    <property type="entry name" value="PRK05738.2-4"/>
    <property type="match status" value="1"/>
</dbReference>
<dbReference type="NCBIfam" id="NF004364">
    <property type="entry name" value="PRK05738.2-5"/>
    <property type="match status" value="1"/>
</dbReference>
<dbReference type="PANTHER" id="PTHR11620">
    <property type="entry name" value="60S RIBOSOMAL PROTEIN L23A"/>
    <property type="match status" value="1"/>
</dbReference>
<dbReference type="Pfam" id="PF00276">
    <property type="entry name" value="Ribosomal_L23"/>
    <property type="match status" value="1"/>
</dbReference>
<dbReference type="SUPFAM" id="SSF54189">
    <property type="entry name" value="Ribosomal proteins S24e, L23 and L15e"/>
    <property type="match status" value="1"/>
</dbReference>
<sequence length="101" mass="11225">MSVTTIKDPRDVVLAPVVSEKSYGLIDEGKYTFLVDPRSNKTEIKLAVEKIFSVKVDSINTINRAGKRKRTKFGWGQRKSTKRAIVTLKEGTIDIFGGPLA</sequence>